<accession>A8L1V4</accession>
<keyword id="KW-0028">Amino-acid biosynthesis</keyword>
<keyword id="KW-0963">Cytoplasm</keyword>
<keyword id="KW-0521">NADP</keyword>
<keyword id="KW-0560">Oxidoreductase</keyword>
<keyword id="KW-0641">Proline biosynthesis</keyword>
<protein>
    <recommendedName>
        <fullName evidence="1">Gamma-glutamyl phosphate reductase</fullName>
        <shortName evidence="1">GPR</shortName>
        <ecNumber evidence="1">1.2.1.41</ecNumber>
    </recommendedName>
    <alternativeName>
        <fullName evidence="1">Glutamate-5-semialdehyde dehydrogenase</fullName>
    </alternativeName>
    <alternativeName>
        <fullName evidence="1">Glutamyl-gamma-semialdehyde dehydrogenase</fullName>
        <shortName evidence="1">GSA dehydrogenase</shortName>
    </alternativeName>
</protein>
<name>PROA_PARS2</name>
<organism>
    <name type="scientific">Parafrankia sp. (strain EAN1pec)</name>
    <dbReference type="NCBI Taxonomy" id="298653"/>
    <lineage>
        <taxon>Bacteria</taxon>
        <taxon>Bacillati</taxon>
        <taxon>Actinomycetota</taxon>
        <taxon>Actinomycetes</taxon>
        <taxon>Frankiales</taxon>
        <taxon>Frankiaceae</taxon>
        <taxon>Parafrankia</taxon>
    </lineage>
</organism>
<sequence length="418" mass="43440">MNTSAEDVRASAVRARQAAGQLAPLSRAAKDAALLGMAAALLDRSAEILAANALDTAAARAAGTSAALVDRLTLTPERIEAMADGLRQVAALEDPVGEVVRGRVLPNGLELRQVRVPLGVIGIIYEARPNVTVDAAGLCIKSGNAVLLRGSASALNSNRVLVDVLREAAVAAGLPADGVQLVPGADHDSVKHLMRLRGLVDVLIPRGGAGLIRAVVEESTVPVIETGVGNCHVYVDVDADVDTALAITLNAKTQKVSVCNSAETLLVHAGIAAEFLPRVLTALRDAGVTVHGDETVRAVDPSAVPVTDEDWATEYLSLDMAVGVVDSLDQALDHIRRWSSGHTEAIVTRSLAASRRFVASCDSAAVMVNASTRFTDGERFGMGAEIGISTQKLHARGPMGLPELTSTTWVGIGDGHLV</sequence>
<proteinExistence type="inferred from homology"/>
<gene>
    <name evidence="1" type="primary">proA</name>
    <name type="ordered locus">Franean1_5256</name>
</gene>
<feature type="chain" id="PRO_1000123808" description="Gamma-glutamyl phosphate reductase">
    <location>
        <begin position="1"/>
        <end position="418"/>
    </location>
</feature>
<evidence type="ECO:0000255" key="1">
    <source>
        <dbReference type="HAMAP-Rule" id="MF_00412"/>
    </source>
</evidence>
<comment type="function">
    <text evidence="1">Catalyzes the NADPH-dependent reduction of L-glutamate 5-phosphate into L-glutamate 5-semialdehyde and phosphate. The product spontaneously undergoes cyclization to form 1-pyrroline-5-carboxylate.</text>
</comment>
<comment type="catalytic activity">
    <reaction evidence="1">
        <text>L-glutamate 5-semialdehyde + phosphate + NADP(+) = L-glutamyl 5-phosphate + NADPH + H(+)</text>
        <dbReference type="Rhea" id="RHEA:19541"/>
        <dbReference type="ChEBI" id="CHEBI:15378"/>
        <dbReference type="ChEBI" id="CHEBI:43474"/>
        <dbReference type="ChEBI" id="CHEBI:57783"/>
        <dbReference type="ChEBI" id="CHEBI:58066"/>
        <dbReference type="ChEBI" id="CHEBI:58274"/>
        <dbReference type="ChEBI" id="CHEBI:58349"/>
        <dbReference type="EC" id="1.2.1.41"/>
    </reaction>
</comment>
<comment type="pathway">
    <text evidence="1">Amino-acid biosynthesis; L-proline biosynthesis; L-glutamate 5-semialdehyde from L-glutamate: step 2/2.</text>
</comment>
<comment type="subcellular location">
    <subcellularLocation>
        <location evidence="1">Cytoplasm</location>
    </subcellularLocation>
</comment>
<comment type="similarity">
    <text evidence="1">Belongs to the gamma-glutamyl phosphate reductase family.</text>
</comment>
<dbReference type="EC" id="1.2.1.41" evidence="1"/>
<dbReference type="EMBL" id="CP000820">
    <property type="protein sequence ID" value="ABW14614.1"/>
    <property type="molecule type" value="Genomic_DNA"/>
</dbReference>
<dbReference type="RefSeq" id="WP_020462726.1">
    <property type="nucleotide sequence ID" value="NC_009921.1"/>
</dbReference>
<dbReference type="SMR" id="A8L1V4"/>
<dbReference type="STRING" id="298653.Franean1_5256"/>
<dbReference type="KEGG" id="fre:Franean1_5256"/>
<dbReference type="eggNOG" id="COG0014">
    <property type="taxonomic scope" value="Bacteria"/>
</dbReference>
<dbReference type="HOGENOM" id="CLU_030231_0_0_11"/>
<dbReference type="UniPathway" id="UPA00098">
    <property type="reaction ID" value="UER00360"/>
</dbReference>
<dbReference type="GO" id="GO:0005737">
    <property type="term" value="C:cytoplasm"/>
    <property type="evidence" value="ECO:0007669"/>
    <property type="project" value="UniProtKB-SubCell"/>
</dbReference>
<dbReference type="GO" id="GO:0004350">
    <property type="term" value="F:glutamate-5-semialdehyde dehydrogenase activity"/>
    <property type="evidence" value="ECO:0007669"/>
    <property type="project" value="UniProtKB-UniRule"/>
</dbReference>
<dbReference type="GO" id="GO:0050661">
    <property type="term" value="F:NADP binding"/>
    <property type="evidence" value="ECO:0007669"/>
    <property type="project" value="InterPro"/>
</dbReference>
<dbReference type="GO" id="GO:0055129">
    <property type="term" value="P:L-proline biosynthetic process"/>
    <property type="evidence" value="ECO:0007669"/>
    <property type="project" value="UniProtKB-UniRule"/>
</dbReference>
<dbReference type="CDD" id="cd07079">
    <property type="entry name" value="ALDH_F18-19_ProA-GPR"/>
    <property type="match status" value="1"/>
</dbReference>
<dbReference type="FunFam" id="3.40.309.10:FF:000006">
    <property type="entry name" value="Gamma-glutamyl phosphate reductase"/>
    <property type="match status" value="1"/>
</dbReference>
<dbReference type="Gene3D" id="3.40.605.10">
    <property type="entry name" value="Aldehyde Dehydrogenase, Chain A, domain 1"/>
    <property type="match status" value="1"/>
</dbReference>
<dbReference type="Gene3D" id="3.40.309.10">
    <property type="entry name" value="Aldehyde Dehydrogenase, Chain A, domain 2"/>
    <property type="match status" value="1"/>
</dbReference>
<dbReference type="HAMAP" id="MF_00412">
    <property type="entry name" value="ProA"/>
    <property type="match status" value="1"/>
</dbReference>
<dbReference type="InterPro" id="IPR016161">
    <property type="entry name" value="Ald_DH/histidinol_DH"/>
</dbReference>
<dbReference type="InterPro" id="IPR016163">
    <property type="entry name" value="Ald_DH_C"/>
</dbReference>
<dbReference type="InterPro" id="IPR016162">
    <property type="entry name" value="Ald_DH_N"/>
</dbReference>
<dbReference type="InterPro" id="IPR015590">
    <property type="entry name" value="Aldehyde_DH_dom"/>
</dbReference>
<dbReference type="InterPro" id="IPR020593">
    <property type="entry name" value="G-glutamylP_reductase_CS"/>
</dbReference>
<dbReference type="InterPro" id="IPR012134">
    <property type="entry name" value="Glu-5-SA_DH"/>
</dbReference>
<dbReference type="InterPro" id="IPR000965">
    <property type="entry name" value="GPR_dom"/>
</dbReference>
<dbReference type="NCBIfam" id="NF001221">
    <property type="entry name" value="PRK00197.1"/>
    <property type="match status" value="1"/>
</dbReference>
<dbReference type="NCBIfam" id="TIGR00407">
    <property type="entry name" value="proA"/>
    <property type="match status" value="1"/>
</dbReference>
<dbReference type="PANTHER" id="PTHR11063:SF8">
    <property type="entry name" value="DELTA-1-PYRROLINE-5-CARBOXYLATE SYNTHASE"/>
    <property type="match status" value="1"/>
</dbReference>
<dbReference type="PANTHER" id="PTHR11063">
    <property type="entry name" value="GLUTAMATE SEMIALDEHYDE DEHYDROGENASE"/>
    <property type="match status" value="1"/>
</dbReference>
<dbReference type="Pfam" id="PF00171">
    <property type="entry name" value="Aldedh"/>
    <property type="match status" value="1"/>
</dbReference>
<dbReference type="PIRSF" id="PIRSF000151">
    <property type="entry name" value="GPR"/>
    <property type="match status" value="1"/>
</dbReference>
<dbReference type="SUPFAM" id="SSF53720">
    <property type="entry name" value="ALDH-like"/>
    <property type="match status" value="1"/>
</dbReference>
<dbReference type="PROSITE" id="PS01223">
    <property type="entry name" value="PROA"/>
    <property type="match status" value="1"/>
</dbReference>
<reference key="1">
    <citation type="journal article" date="2007" name="Genome Res.">
        <title>Genome characteristics of facultatively symbiotic Frankia sp. strains reflect host range and host plant biogeography.</title>
        <authorList>
            <person name="Normand P."/>
            <person name="Lapierre P."/>
            <person name="Tisa L.S."/>
            <person name="Gogarten J.P."/>
            <person name="Alloisio N."/>
            <person name="Bagnarol E."/>
            <person name="Bassi C.A."/>
            <person name="Berry A.M."/>
            <person name="Bickhart D.M."/>
            <person name="Choisne N."/>
            <person name="Couloux A."/>
            <person name="Cournoyer B."/>
            <person name="Cruveiller S."/>
            <person name="Daubin V."/>
            <person name="Demange N."/>
            <person name="Francino M.P."/>
            <person name="Goltsman E."/>
            <person name="Huang Y."/>
            <person name="Kopp O.R."/>
            <person name="Labarre L."/>
            <person name="Lapidus A."/>
            <person name="Lavire C."/>
            <person name="Marechal J."/>
            <person name="Martinez M."/>
            <person name="Mastronunzio J.E."/>
            <person name="Mullin B.C."/>
            <person name="Niemann J."/>
            <person name="Pujic P."/>
            <person name="Rawnsley T."/>
            <person name="Rouy Z."/>
            <person name="Schenowitz C."/>
            <person name="Sellstedt A."/>
            <person name="Tavares F."/>
            <person name="Tomkins J.P."/>
            <person name="Vallenet D."/>
            <person name="Valverde C."/>
            <person name="Wall L.G."/>
            <person name="Wang Y."/>
            <person name="Medigue C."/>
            <person name="Benson D.R."/>
        </authorList>
    </citation>
    <scope>NUCLEOTIDE SEQUENCE [LARGE SCALE GENOMIC DNA]</scope>
    <source>
        <strain>EAN1pec</strain>
    </source>
</reference>